<reference key="1">
    <citation type="journal article" date="2002" name="Nature">
        <title>Comparison of the genomes of two Xanthomonas pathogens with differing host specificities.</title>
        <authorList>
            <person name="da Silva A.C.R."/>
            <person name="Ferro J.A."/>
            <person name="Reinach F.C."/>
            <person name="Farah C.S."/>
            <person name="Furlan L.R."/>
            <person name="Quaggio R.B."/>
            <person name="Monteiro-Vitorello C.B."/>
            <person name="Van Sluys M.A."/>
            <person name="Almeida N.F. Jr."/>
            <person name="Alves L.M.C."/>
            <person name="do Amaral A.M."/>
            <person name="Bertolini M.C."/>
            <person name="Camargo L.E.A."/>
            <person name="Camarotte G."/>
            <person name="Cannavan F."/>
            <person name="Cardozo J."/>
            <person name="Chambergo F."/>
            <person name="Ciapina L.P."/>
            <person name="Cicarelli R.M.B."/>
            <person name="Coutinho L.L."/>
            <person name="Cursino-Santos J.R."/>
            <person name="El-Dorry H."/>
            <person name="Faria J.B."/>
            <person name="Ferreira A.J.S."/>
            <person name="Ferreira R.C.C."/>
            <person name="Ferro M.I.T."/>
            <person name="Formighieri E.F."/>
            <person name="Franco M.C."/>
            <person name="Greggio C.C."/>
            <person name="Gruber A."/>
            <person name="Katsuyama A.M."/>
            <person name="Kishi L.T."/>
            <person name="Leite R.P."/>
            <person name="Lemos E.G.M."/>
            <person name="Lemos M.V.F."/>
            <person name="Locali E.C."/>
            <person name="Machado M.A."/>
            <person name="Madeira A.M.B.N."/>
            <person name="Martinez-Rossi N.M."/>
            <person name="Martins E.C."/>
            <person name="Meidanis J."/>
            <person name="Menck C.F.M."/>
            <person name="Miyaki C.Y."/>
            <person name="Moon D.H."/>
            <person name="Moreira L.M."/>
            <person name="Novo M.T.M."/>
            <person name="Okura V.K."/>
            <person name="Oliveira M.C."/>
            <person name="Oliveira V.R."/>
            <person name="Pereira H.A."/>
            <person name="Rossi A."/>
            <person name="Sena J.A.D."/>
            <person name="Silva C."/>
            <person name="de Souza R.F."/>
            <person name="Spinola L.A.F."/>
            <person name="Takita M.A."/>
            <person name="Tamura R.E."/>
            <person name="Teixeira E.C."/>
            <person name="Tezza R.I.D."/>
            <person name="Trindade dos Santos M."/>
            <person name="Truffi D."/>
            <person name="Tsai S.M."/>
            <person name="White F.F."/>
            <person name="Setubal J.C."/>
            <person name="Kitajima J.P."/>
        </authorList>
    </citation>
    <scope>NUCLEOTIDE SEQUENCE [LARGE SCALE GENOMIC DNA]</scope>
    <source>
        <strain>306</strain>
    </source>
</reference>
<name>RS3_XANAC</name>
<gene>
    <name evidence="1" type="primary">rpsC</name>
    <name type="ordered locus">XAC0978</name>
</gene>
<accession>Q8PNR9</accession>
<sequence length="244" mass="27467">MGHKVHPTGIRLGIAKDWNSKWYANKAEFASYLAADLKVREMLRKKLAQAGVSKILIERPAKTARVTIHTARPGVVIGKRGEDIEKLRKEVSELMGVPAHINVTEVRKPELDAQLVAESIAQQLERRIMFRRAMKRSVGNAMRLGALGIKVNVAGRLNGAEIARSEWYREGRVPLHTLRADIDYGFAEASTTYGIIGIKVWIYKGEVFDFSQVGQEKQDDSPRNDRNDRGDRGDRPSRPAREAR</sequence>
<organism>
    <name type="scientific">Xanthomonas axonopodis pv. citri (strain 306)</name>
    <dbReference type="NCBI Taxonomy" id="190486"/>
    <lineage>
        <taxon>Bacteria</taxon>
        <taxon>Pseudomonadati</taxon>
        <taxon>Pseudomonadota</taxon>
        <taxon>Gammaproteobacteria</taxon>
        <taxon>Lysobacterales</taxon>
        <taxon>Lysobacteraceae</taxon>
        <taxon>Xanthomonas</taxon>
    </lineage>
</organism>
<protein>
    <recommendedName>
        <fullName evidence="1">Small ribosomal subunit protein uS3</fullName>
    </recommendedName>
    <alternativeName>
        <fullName evidence="3">30S ribosomal protein S3</fullName>
    </alternativeName>
</protein>
<evidence type="ECO:0000255" key="1">
    <source>
        <dbReference type="HAMAP-Rule" id="MF_01309"/>
    </source>
</evidence>
<evidence type="ECO:0000256" key="2">
    <source>
        <dbReference type="SAM" id="MobiDB-lite"/>
    </source>
</evidence>
<evidence type="ECO:0000305" key="3"/>
<feature type="chain" id="PRO_0000130237" description="Small ribosomal subunit protein uS3">
    <location>
        <begin position="1"/>
        <end position="244"/>
    </location>
</feature>
<feature type="domain" description="KH type-2" evidence="1">
    <location>
        <begin position="39"/>
        <end position="107"/>
    </location>
</feature>
<feature type="region of interest" description="Disordered" evidence="2">
    <location>
        <begin position="213"/>
        <end position="244"/>
    </location>
</feature>
<feature type="compositionally biased region" description="Basic and acidic residues" evidence="2">
    <location>
        <begin position="216"/>
        <end position="244"/>
    </location>
</feature>
<keyword id="KW-0687">Ribonucleoprotein</keyword>
<keyword id="KW-0689">Ribosomal protein</keyword>
<keyword id="KW-0694">RNA-binding</keyword>
<keyword id="KW-0699">rRNA-binding</keyword>
<dbReference type="EMBL" id="AE008923">
    <property type="protein sequence ID" value="AAM35861.1"/>
    <property type="molecule type" value="Genomic_DNA"/>
</dbReference>
<dbReference type="RefSeq" id="WP_003486708.1">
    <property type="nucleotide sequence ID" value="NC_003919.1"/>
</dbReference>
<dbReference type="SMR" id="Q8PNR9"/>
<dbReference type="GeneID" id="66910164"/>
<dbReference type="KEGG" id="xac:XAC0978"/>
<dbReference type="eggNOG" id="COG0092">
    <property type="taxonomic scope" value="Bacteria"/>
</dbReference>
<dbReference type="HOGENOM" id="CLU_058591_0_2_6"/>
<dbReference type="Proteomes" id="UP000000576">
    <property type="component" value="Chromosome"/>
</dbReference>
<dbReference type="GO" id="GO:0022627">
    <property type="term" value="C:cytosolic small ribosomal subunit"/>
    <property type="evidence" value="ECO:0007669"/>
    <property type="project" value="TreeGrafter"/>
</dbReference>
<dbReference type="GO" id="GO:0003729">
    <property type="term" value="F:mRNA binding"/>
    <property type="evidence" value="ECO:0007669"/>
    <property type="project" value="UniProtKB-UniRule"/>
</dbReference>
<dbReference type="GO" id="GO:0019843">
    <property type="term" value="F:rRNA binding"/>
    <property type="evidence" value="ECO:0007669"/>
    <property type="project" value="UniProtKB-UniRule"/>
</dbReference>
<dbReference type="GO" id="GO:0003735">
    <property type="term" value="F:structural constituent of ribosome"/>
    <property type="evidence" value="ECO:0007669"/>
    <property type="project" value="InterPro"/>
</dbReference>
<dbReference type="GO" id="GO:0006412">
    <property type="term" value="P:translation"/>
    <property type="evidence" value="ECO:0007669"/>
    <property type="project" value="UniProtKB-UniRule"/>
</dbReference>
<dbReference type="CDD" id="cd02412">
    <property type="entry name" value="KH-II_30S_S3"/>
    <property type="match status" value="1"/>
</dbReference>
<dbReference type="FunFam" id="3.30.1140.32:FF:000001">
    <property type="entry name" value="30S ribosomal protein S3"/>
    <property type="match status" value="1"/>
</dbReference>
<dbReference type="FunFam" id="3.30.300.20:FF:000001">
    <property type="entry name" value="30S ribosomal protein S3"/>
    <property type="match status" value="1"/>
</dbReference>
<dbReference type="Gene3D" id="3.30.300.20">
    <property type="match status" value="1"/>
</dbReference>
<dbReference type="Gene3D" id="3.30.1140.32">
    <property type="entry name" value="Ribosomal protein S3, C-terminal domain"/>
    <property type="match status" value="1"/>
</dbReference>
<dbReference type="HAMAP" id="MF_01309_B">
    <property type="entry name" value="Ribosomal_uS3_B"/>
    <property type="match status" value="1"/>
</dbReference>
<dbReference type="InterPro" id="IPR004087">
    <property type="entry name" value="KH_dom"/>
</dbReference>
<dbReference type="InterPro" id="IPR015946">
    <property type="entry name" value="KH_dom-like_a/b"/>
</dbReference>
<dbReference type="InterPro" id="IPR004044">
    <property type="entry name" value="KH_dom_type_2"/>
</dbReference>
<dbReference type="InterPro" id="IPR009019">
    <property type="entry name" value="KH_sf_prok-type"/>
</dbReference>
<dbReference type="InterPro" id="IPR036419">
    <property type="entry name" value="Ribosomal_S3_C_sf"/>
</dbReference>
<dbReference type="InterPro" id="IPR005704">
    <property type="entry name" value="Ribosomal_uS3_bac-typ"/>
</dbReference>
<dbReference type="InterPro" id="IPR001351">
    <property type="entry name" value="Ribosomal_uS3_C"/>
</dbReference>
<dbReference type="InterPro" id="IPR018280">
    <property type="entry name" value="Ribosomal_uS3_CS"/>
</dbReference>
<dbReference type="NCBIfam" id="TIGR01009">
    <property type="entry name" value="rpsC_bact"/>
    <property type="match status" value="1"/>
</dbReference>
<dbReference type="PANTHER" id="PTHR11760">
    <property type="entry name" value="30S/40S RIBOSOMAL PROTEIN S3"/>
    <property type="match status" value="1"/>
</dbReference>
<dbReference type="PANTHER" id="PTHR11760:SF19">
    <property type="entry name" value="SMALL RIBOSOMAL SUBUNIT PROTEIN US3C"/>
    <property type="match status" value="1"/>
</dbReference>
<dbReference type="Pfam" id="PF07650">
    <property type="entry name" value="KH_2"/>
    <property type="match status" value="1"/>
</dbReference>
<dbReference type="Pfam" id="PF00189">
    <property type="entry name" value="Ribosomal_S3_C"/>
    <property type="match status" value="1"/>
</dbReference>
<dbReference type="SMART" id="SM00322">
    <property type="entry name" value="KH"/>
    <property type="match status" value="1"/>
</dbReference>
<dbReference type="SUPFAM" id="SSF54814">
    <property type="entry name" value="Prokaryotic type KH domain (KH-domain type II)"/>
    <property type="match status" value="1"/>
</dbReference>
<dbReference type="SUPFAM" id="SSF54821">
    <property type="entry name" value="Ribosomal protein S3 C-terminal domain"/>
    <property type="match status" value="1"/>
</dbReference>
<dbReference type="PROSITE" id="PS50823">
    <property type="entry name" value="KH_TYPE_2"/>
    <property type="match status" value="1"/>
</dbReference>
<dbReference type="PROSITE" id="PS00548">
    <property type="entry name" value="RIBOSOMAL_S3"/>
    <property type="match status" value="1"/>
</dbReference>
<proteinExistence type="inferred from homology"/>
<comment type="function">
    <text evidence="1">Binds the lower part of the 30S subunit head. Binds mRNA in the 70S ribosome, positioning it for translation.</text>
</comment>
<comment type="subunit">
    <text evidence="1">Part of the 30S ribosomal subunit. Forms a tight complex with proteins S10 and S14.</text>
</comment>
<comment type="similarity">
    <text evidence="1">Belongs to the universal ribosomal protein uS3 family.</text>
</comment>